<feature type="chain" id="PRO_1000135494" description="Putative 4-hydroxy-4-methyl-2-oxoglutarate aldolase">
    <location>
        <begin position="1"/>
        <end position="159"/>
    </location>
</feature>
<feature type="binding site" evidence="1">
    <location>
        <begin position="75"/>
        <end position="78"/>
    </location>
    <ligand>
        <name>substrate</name>
    </ligand>
</feature>
<feature type="binding site" evidence="1">
    <location>
        <position position="97"/>
    </location>
    <ligand>
        <name>substrate</name>
    </ligand>
</feature>
<feature type="binding site" evidence="1">
    <location>
        <position position="98"/>
    </location>
    <ligand>
        <name>a divalent metal cation</name>
        <dbReference type="ChEBI" id="CHEBI:60240"/>
    </ligand>
</feature>
<gene>
    <name type="ordered locus">LHK_01472</name>
</gene>
<evidence type="ECO:0000250" key="1"/>
<evidence type="ECO:0000305" key="2"/>
<keyword id="KW-0456">Lyase</keyword>
<keyword id="KW-0479">Metal-binding</keyword>
<keyword id="KW-1185">Reference proteome</keyword>
<reference key="1">
    <citation type="journal article" date="2009" name="PLoS Genet.">
        <title>The complete genome and proteome of Laribacter hongkongensis reveal potential mechanisms for adaptations to different temperatures and habitats.</title>
        <authorList>
            <person name="Woo P.C.Y."/>
            <person name="Lau S.K.P."/>
            <person name="Tse H."/>
            <person name="Teng J.L.L."/>
            <person name="Curreem S.O."/>
            <person name="Tsang A.K.L."/>
            <person name="Fan R.Y.Y."/>
            <person name="Wong G.K.M."/>
            <person name="Huang Y."/>
            <person name="Loman N.J."/>
            <person name="Snyder L.A.S."/>
            <person name="Cai J.J."/>
            <person name="Huang J.-D."/>
            <person name="Mak W."/>
            <person name="Pallen M.J."/>
            <person name="Lok S."/>
            <person name="Yuen K.-Y."/>
        </authorList>
    </citation>
    <scope>NUCLEOTIDE SEQUENCE [LARGE SCALE GENOMIC DNA]</scope>
    <source>
        <strain>HLHK9</strain>
    </source>
</reference>
<sequence length="159" mass="16933">MDFLTADLCDEFSDRLQILAPGYASFGGHARFAGRIATLKVFEDNSRVREMLSEPGEGRVLVVDGGGSRRCALVGDQLGALAVRNGWAGIVVYGCIRDSVALGLLPLGVRALATHPLKSVKNGVGERELAVTFDGATFRPGDWLYADEDGVITSPDPLL</sequence>
<accession>C1D7M1</accession>
<name>RRAAH_LARHH</name>
<organism>
    <name type="scientific">Laribacter hongkongensis (strain HLHK9)</name>
    <dbReference type="NCBI Taxonomy" id="557598"/>
    <lineage>
        <taxon>Bacteria</taxon>
        <taxon>Pseudomonadati</taxon>
        <taxon>Pseudomonadota</taxon>
        <taxon>Betaproteobacteria</taxon>
        <taxon>Neisseriales</taxon>
        <taxon>Aquaspirillaceae</taxon>
        <taxon>Laribacter</taxon>
    </lineage>
</organism>
<comment type="function">
    <text evidence="1">Catalyzes the aldol cleavage of 4-hydroxy-4-methyl-2-oxoglutarate (HMG) into 2 molecules of pyruvate. Also contains a secondary oxaloacetate (OAA) decarboxylase activity due to the common pyruvate enolate transition state formed following C-C bond cleavage in the retro-aldol and decarboxylation reactions (By similarity).</text>
</comment>
<comment type="catalytic activity">
    <reaction>
        <text>4-hydroxy-4-methyl-2-oxoglutarate = 2 pyruvate</text>
        <dbReference type="Rhea" id="RHEA:22748"/>
        <dbReference type="ChEBI" id="CHEBI:15361"/>
        <dbReference type="ChEBI" id="CHEBI:58276"/>
        <dbReference type="EC" id="4.1.3.17"/>
    </reaction>
</comment>
<comment type="catalytic activity">
    <reaction>
        <text>oxaloacetate + H(+) = pyruvate + CO2</text>
        <dbReference type="Rhea" id="RHEA:15641"/>
        <dbReference type="ChEBI" id="CHEBI:15361"/>
        <dbReference type="ChEBI" id="CHEBI:15378"/>
        <dbReference type="ChEBI" id="CHEBI:16452"/>
        <dbReference type="ChEBI" id="CHEBI:16526"/>
        <dbReference type="EC" id="4.1.1.112"/>
    </reaction>
</comment>
<comment type="cofactor">
    <cofactor evidence="1">
        <name>a divalent metal cation</name>
        <dbReference type="ChEBI" id="CHEBI:60240"/>
    </cofactor>
    <text evidence="1">Divalent metal cation.</text>
</comment>
<comment type="subunit">
    <text evidence="1">Homotrimer.</text>
</comment>
<comment type="similarity">
    <text evidence="2">Belongs to the class II aldolase/RraA-like family.</text>
</comment>
<dbReference type="EC" id="4.1.3.17"/>
<dbReference type="EC" id="4.1.1.112"/>
<dbReference type="EMBL" id="CP001154">
    <property type="protein sequence ID" value="ACO74461.1"/>
    <property type="molecule type" value="Genomic_DNA"/>
</dbReference>
<dbReference type="SMR" id="C1D7M1"/>
<dbReference type="STRING" id="557598.LHK_01472"/>
<dbReference type="KEGG" id="lhk:LHK_01472"/>
<dbReference type="eggNOG" id="COG0684">
    <property type="taxonomic scope" value="Bacteria"/>
</dbReference>
<dbReference type="HOGENOM" id="CLU_072626_4_0_4"/>
<dbReference type="Proteomes" id="UP000002010">
    <property type="component" value="Chromosome"/>
</dbReference>
<dbReference type="GO" id="GO:0047443">
    <property type="term" value="F:4-hydroxy-4-methyl-2-oxoglutarate aldolase activity"/>
    <property type="evidence" value="ECO:0007669"/>
    <property type="project" value="UniProtKB-EC"/>
</dbReference>
<dbReference type="GO" id="GO:0046872">
    <property type="term" value="F:metal ion binding"/>
    <property type="evidence" value="ECO:0007669"/>
    <property type="project" value="UniProtKB-KW"/>
</dbReference>
<dbReference type="GO" id="GO:0008948">
    <property type="term" value="F:oxaloacetate decarboxylase activity"/>
    <property type="evidence" value="ECO:0007669"/>
    <property type="project" value="UniProtKB-EC"/>
</dbReference>
<dbReference type="GO" id="GO:0008428">
    <property type="term" value="F:ribonuclease inhibitor activity"/>
    <property type="evidence" value="ECO:0007669"/>
    <property type="project" value="InterPro"/>
</dbReference>
<dbReference type="GO" id="GO:0051252">
    <property type="term" value="P:regulation of RNA metabolic process"/>
    <property type="evidence" value="ECO:0007669"/>
    <property type="project" value="InterPro"/>
</dbReference>
<dbReference type="CDD" id="cd16841">
    <property type="entry name" value="RraA_family"/>
    <property type="match status" value="1"/>
</dbReference>
<dbReference type="Gene3D" id="3.50.30.40">
    <property type="entry name" value="Ribonuclease E inhibitor RraA/RraA-like"/>
    <property type="match status" value="1"/>
</dbReference>
<dbReference type="InterPro" id="IPR010203">
    <property type="entry name" value="RraA"/>
</dbReference>
<dbReference type="InterPro" id="IPR005493">
    <property type="entry name" value="RraA/RraA-like"/>
</dbReference>
<dbReference type="InterPro" id="IPR036704">
    <property type="entry name" value="RraA/RraA-like_sf"/>
</dbReference>
<dbReference type="NCBIfam" id="TIGR01935">
    <property type="entry name" value="NOT-MenG"/>
    <property type="match status" value="1"/>
</dbReference>
<dbReference type="NCBIfam" id="NF006875">
    <property type="entry name" value="PRK09372.1"/>
    <property type="match status" value="1"/>
</dbReference>
<dbReference type="PANTHER" id="PTHR33254">
    <property type="entry name" value="4-HYDROXY-4-METHYL-2-OXOGLUTARATE ALDOLASE 3-RELATED"/>
    <property type="match status" value="1"/>
</dbReference>
<dbReference type="PANTHER" id="PTHR33254:SF4">
    <property type="entry name" value="4-HYDROXY-4-METHYL-2-OXOGLUTARATE ALDOLASE 3-RELATED"/>
    <property type="match status" value="1"/>
</dbReference>
<dbReference type="Pfam" id="PF03737">
    <property type="entry name" value="RraA-like"/>
    <property type="match status" value="1"/>
</dbReference>
<dbReference type="SUPFAM" id="SSF89562">
    <property type="entry name" value="RraA-like"/>
    <property type="match status" value="1"/>
</dbReference>
<proteinExistence type="inferred from homology"/>
<protein>
    <recommendedName>
        <fullName>Putative 4-hydroxy-4-methyl-2-oxoglutarate aldolase</fullName>
        <shortName>HMG aldolase</shortName>
        <ecNumber>4.1.3.17</ecNumber>
    </recommendedName>
    <alternativeName>
        <fullName>Oxaloacetate decarboxylase</fullName>
        <shortName>OAA decarboxylase</shortName>
        <ecNumber>4.1.1.112</ecNumber>
    </alternativeName>
    <alternativeName>
        <fullName>Regulator of ribonuclease activity homolog</fullName>
    </alternativeName>
    <alternativeName>
        <fullName>RraA-like protein</fullName>
    </alternativeName>
</protein>